<feature type="chain" id="PRO_0000357235" description="Methylthioribose-1-phosphate isomerase">
    <location>
        <begin position="1"/>
        <end position="354"/>
    </location>
</feature>
<feature type="active site" description="Proton donor" evidence="1">
    <location>
        <position position="243"/>
    </location>
</feature>
<feature type="binding site" evidence="1">
    <location>
        <begin position="48"/>
        <end position="50"/>
    </location>
    <ligand>
        <name>substrate</name>
    </ligand>
</feature>
<feature type="binding site" evidence="1">
    <location>
        <position position="95"/>
    </location>
    <ligand>
        <name>substrate</name>
    </ligand>
</feature>
<feature type="binding site" evidence="1">
    <location>
        <position position="202"/>
    </location>
    <ligand>
        <name>substrate</name>
    </ligand>
</feature>
<feature type="binding site" evidence="1">
    <location>
        <begin position="253"/>
        <end position="254"/>
    </location>
    <ligand>
        <name>substrate</name>
    </ligand>
</feature>
<feature type="site" description="Transition state stabilizer" evidence="1">
    <location>
        <position position="163"/>
    </location>
</feature>
<keyword id="KW-0028">Amino-acid biosynthesis</keyword>
<keyword id="KW-0413">Isomerase</keyword>
<keyword id="KW-0486">Methionine biosynthesis</keyword>
<keyword id="KW-1185">Reference proteome</keyword>
<sequence length="354" mass="37937">MSSAFRTVWWEAGQVCLIDQRLLPNETSVVRCTTVEEVARAIRTMQIRGAPAIGCAAAYGMALAAHHAASTATDGDHQQVYDQLAAAKTILDAQRPTAVNLSWATRRVQEKVRRLIPAAPNTLARAALEEAHAILAEDLAMCYAIGRHGVALIPPRGHVLTHCNAGGLATAGYGTALAPIRMAHEQGRPIHVYVDETRPFLQGARLTAWELLQERIPMTLITDTMAGHFMQRGAIDCVIVGADRIVANGDVANKIGTYSLAVLARAHGIPFYVAAPSSTIDLSLPNGEAIPIEERSPDEVTTCFGRRIAPEGAVAAHPAFDVTPSHLVTAIITECGVIYPPFEEPLRRVVAGSE</sequence>
<gene>
    <name evidence="1" type="primary">mtnA</name>
    <name type="ordered locus">Rcas_0156</name>
</gene>
<organism>
    <name type="scientific">Roseiflexus castenholzii (strain DSM 13941 / HLO8)</name>
    <dbReference type="NCBI Taxonomy" id="383372"/>
    <lineage>
        <taxon>Bacteria</taxon>
        <taxon>Bacillati</taxon>
        <taxon>Chloroflexota</taxon>
        <taxon>Chloroflexia</taxon>
        <taxon>Chloroflexales</taxon>
        <taxon>Roseiflexineae</taxon>
        <taxon>Roseiflexaceae</taxon>
        <taxon>Roseiflexus</taxon>
    </lineage>
</organism>
<dbReference type="EC" id="5.3.1.23" evidence="1"/>
<dbReference type="EMBL" id="CP000804">
    <property type="protein sequence ID" value="ABU56291.1"/>
    <property type="molecule type" value="Genomic_DNA"/>
</dbReference>
<dbReference type="RefSeq" id="WP_011997696.1">
    <property type="nucleotide sequence ID" value="NC_009767.1"/>
</dbReference>
<dbReference type="SMR" id="A7NFR2"/>
<dbReference type="STRING" id="383372.Rcas_0156"/>
<dbReference type="KEGG" id="rca:Rcas_0156"/>
<dbReference type="eggNOG" id="COG0182">
    <property type="taxonomic scope" value="Bacteria"/>
</dbReference>
<dbReference type="HOGENOM" id="CLU_016218_1_2_0"/>
<dbReference type="OrthoDB" id="9803436at2"/>
<dbReference type="UniPathway" id="UPA00904">
    <property type="reaction ID" value="UER00874"/>
</dbReference>
<dbReference type="Proteomes" id="UP000000263">
    <property type="component" value="Chromosome"/>
</dbReference>
<dbReference type="GO" id="GO:0046523">
    <property type="term" value="F:S-methyl-5-thioribose-1-phosphate isomerase activity"/>
    <property type="evidence" value="ECO:0007669"/>
    <property type="project" value="UniProtKB-UniRule"/>
</dbReference>
<dbReference type="GO" id="GO:0019509">
    <property type="term" value="P:L-methionine salvage from methylthioadenosine"/>
    <property type="evidence" value="ECO:0007669"/>
    <property type="project" value="UniProtKB-UniRule"/>
</dbReference>
<dbReference type="FunFam" id="1.20.120.420:FF:000003">
    <property type="entry name" value="Methylthioribose-1-phosphate isomerase"/>
    <property type="match status" value="1"/>
</dbReference>
<dbReference type="FunFam" id="3.40.50.10470:FF:000006">
    <property type="entry name" value="Methylthioribose-1-phosphate isomerase"/>
    <property type="match status" value="1"/>
</dbReference>
<dbReference type="Gene3D" id="1.20.120.420">
    <property type="entry name" value="translation initiation factor eif-2b, domain 1"/>
    <property type="match status" value="1"/>
</dbReference>
<dbReference type="Gene3D" id="3.40.50.10470">
    <property type="entry name" value="Translation initiation factor eif-2b, domain 2"/>
    <property type="match status" value="1"/>
</dbReference>
<dbReference type="HAMAP" id="MF_01678">
    <property type="entry name" value="Salvage_MtnA"/>
    <property type="match status" value="1"/>
</dbReference>
<dbReference type="InterPro" id="IPR000649">
    <property type="entry name" value="IF-2B-related"/>
</dbReference>
<dbReference type="InterPro" id="IPR005251">
    <property type="entry name" value="IF-M1Pi"/>
</dbReference>
<dbReference type="InterPro" id="IPR042529">
    <property type="entry name" value="IF_2B-like_C"/>
</dbReference>
<dbReference type="InterPro" id="IPR011559">
    <property type="entry name" value="Initiation_fac_2B_a/b/d"/>
</dbReference>
<dbReference type="InterPro" id="IPR027363">
    <property type="entry name" value="M1Pi_N"/>
</dbReference>
<dbReference type="InterPro" id="IPR037171">
    <property type="entry name" value="NagB/RpiA_transferase-like"/>
</dbReference>
<dbReference type="NCBIfam" id="TIGR00524">
    <property type="entry name" value="eIF-2B_rel"/>
    <property type="match status" value="1"/>
</dbReference>
<dbReference type="NCBIfam" id="NF004326">
    <property type="entry name" value="PRK05720.1"/>
    <property type="match status" value="1"/>
</dbReference>
<dbReference type="NCBIfam" id="TIGR00512">
    <property type="entry name" value="salvage_mtnA"/>
    <property type="match status" value="1"/>
</dbReference>
<dbReference type="PANTHER" id="PTHR43475">
    <property type="entry name" value="METHYLTHIORIBOSE-1-PHOSPHATE ISOMERASE"/>
    <property type="match status" value="1"/>
</dbReference>
<dbReference type="PANTHER" id="PTHR43475:SF1">
    <property type="entry name" value="METHYLTHIORIBOSE-1-PHOSPHATE ISOMERASE"/>
    <property type="match status" value="1"/>
</dbReference>
<dbReference type="Pfam" id="PF01008">
    <property type="entry name" value="IF-2B"/>
    <property type="match status" value="1"/>
</dbReference>
<dbReference type="SUPFAM" id="SSF100950">
    <property type="entry name" value="NagB/RpiA/CoA transferase-like"/>
    <property type="match status" value="1"/>
</dbReference>
<evidence type="ECO:0000255" key="1">
    <source>
        <dbReference type="HAMAP-Rule" id="MF_01678"/>
    </source>
</evidence>
<evidence type="ECO:0000305" key="2"/>
<comment type="function">
    <text evidence="1">Catalyzes the interconversion of methylthioribose-1-phosphate (MTR-1-P) into methylthioribulose-1-phosphate (MTRu-1-P).</text>
</comment>
<comment type="catalytic activity">
    <reaction evidence="1">
        <text>5-(methylsulfanyl)-alpha-D-ribose 1-phosphate = 5-(methylsulfanyl)-D-ribulose 1-phosphate</text>
        <dbReference type="Rhea" id="RHEA:19989"/>
        <dbReference type="ChEBI" id="CHEBI:58533"/>
        <dbReference type="ChEBI" id="CHEBI:58548"/>
        <dbReference type="EC" id="5.3.1.23"/>
    </reaction>
</comment>
<comment type="pathway">
    <text evidence="1">Amino-acid biosynthesis; L-methionine biosynthesis via salvage pathway; L-methionine from S-methyl-5-thio-alpha-D-ribose 1-phosphate: step 1/6.</text>
</comment>
<comment type="similarity">
    <text evidence="2">Belongs to the eIF-2B alpha/beta/delta subunits family. MtnA subfamily.</text>
</comment>
<protein>
    <recommendedName>
        <fullName evidence="1">Methylthioribose-1-phosphate isomerase</fullName>
        <shortName evidence="1">M1Pi</shortName>
        <shortName evidence="1">MTR-1-P isomerase</shortName>
        <ecNumber evidence="1">5.3.1.23</ecNumber>
    </recommendedName>
    <alternativeName>
        <fullName evidence="1">S-methyl-5-thioribose-1-phosphate isomerase</fullName>
    </alternativeName>
</protein>
<name>MTNA_ROSCS</name>
<accession>A7NFR2</accession>
<proteinExistence type="inferred from homology"/>
<reference key="1">
    <citation type="submission" date="2007-08" db="EMBL/GenBank/DDBJ databases">
        <title>Complete sequence of Roseiflexus castenholzii DSM 13941.</title>
        <authorList>
            <consortium name="US DOE Joint Genome Institute"/>
            <person name="Copeland A."/>
            <person name="Lucas S."/>
            <person name="Lapidus A."/>
            <person name="Barry K."/>
            <person name="Glavina del Rio T."/>
            <person name="Dalin E."/>
            <person name="Tice H."/>
            <person name="Pitluck S."/>
            <person name="Thompson L.S."/>
            <person name="Brettin T."/>
            <person name="Bruce D."/>
            <person name="Detter J.C."/>
            <person name="Han C."/>
            <person name="Tapia R."/>
            <person name="Schmutz J."/>
            <person name="Larimer F."/>
            <person name="Land M."/>
            <person name="Hauser L."/>
            <person name="Kyrpides N."/>
            <person name="Mikhailova N."/>
            <person name="Bryant D.A."/>
            <person name="Hanada S."/>
            <person name="Tsukatani Y."/>
            <person name="Richardson P."/>
        </authorList>
    </citation>
    <scope>NUCLEOTIDE SEQUENCE [LARGE SCALE GENOMIC DNA]</scope>
    <source>
        <strain>DSM 13941 / HLO8</strain>
    </source>
</reference>